<organism>
    <name type="scientific">Mus musculus</name>
    <name type="common">Mouse</name>
    <dbReference type="NCBI Taxonomy" id="10090"/>
    <lineage>
        <taxon>Eukaryota</taxon>
        <taxon>Metazoa</taxon>
        <taxon>Chordata</taxon>
        <taxon>Craniata</taxon>
        <taxon>Vertebrata</taxon>
        <taxon>Euteleostomi</taxon>
        <taxon>Mammalia</taxon>
        <taxon>Eutheria</taxon>
        <taxon>Euarchontoglires</taxon>
        <taxon>Glires</taxon>
        <taxon>Rodentia</taxon>
        <taxon>Myomorpha</taxon>
        <taxon>Muroidea</taxon>
        <taxon>Muridae</taxon>
        <taxon>Murinae</taxon>
        <taxon>Mus</taxon>
        <taxon>Mus</taxon>
    </lineage>
</organism>
<sequence length="186" mass="20959">MGLLDRLSGLLGLKKKEVHVLCLGLDNSGKTTIINKLKPSNAQSQDIVPTIGFSIEKFKSSSLSFTVFDMSGQGRYRNLWEHYYKDGQAIIFVIDSSDKLRMVVAKEELDTLLNHPDIKHRRIPILFFANKMDLRDSVTSVKVSQLLCLESIKDKPWHICASDAIKGEGLQEGVDWLQDQIQAVKT</sequence>
<accession>O88848</accession>
<accession>Q3TY77</accession>
<dbReference type="EMBL" id="AF031903">
    <property type="protein sequence ID" value="AAC62194.1"/>
    <property type="molecule type" value="mRNA"/>
</dbReference>
<dbReference type="EMBL" id="AK158832">
    <property type="protein sequence ID" value="BAE34686.1"/>
    <property type="molecule type" value="mRNA"/>
</dbReference>
<dbReference type="EMBL" id="AK003778">
    <property type="protein sequence ID" value="BAB22990.1"/>
    <property type="molecule type" value="mRNA"/>
</dbReference>
<dbReference type="CCDS" id="CCDS28259.1">
    <molecule id="O88848-1"/>
</dbReference>
<dbReference type="CCDS" id="CCDS84248.1">
    <molecule id="O88848-2"/>
</dbReference>
<dbReference type="RefSeq" id="NP_001334173.1">
    <molecule id="O88848-2"/>
    <property type="nucleotide sequence ID" value="NM_001347244.2"/>
</dbReference>
<dbReference type="RefSeq" id="NP_062639.3">
    <molecule id="O88848-1"/>
    <property type="nucleotide sequence ID" value="NM_019665.3"/>
</dbReference>
<dbReference type="SMR" id="O88848"/>
<dbReference type="BioGRID" id="207885">
    <property type="interactions" value="2"/>
</dbReference>
<dbReference type="CORUM" id="O88848"/>
<dbReference type="FunCoup" id="O88848">
    <property type="interactions" value="737"/>
</dbReference>
<dbReference type="IntAct" id="O88848">
    <property type="interactions" value="10"/>
</dbReference>
<dbReference type="STRING" id="10090.ENSMUSP00000097238"/>
<dbReference type="GlyGen" id="O88848">
    <property type="glycosylation" value="1 site, 1 O-linked glycan (1 site)"/>
</dbReference>
<dbReference type="PhosphoSitePlus" id="O88848"/>
<dbReference type="SwissPalm" id="O88848"/>
<dbReference type="PaxDb" id="10090-ENSMUSP00000023405"/>
<dbReference type="PeptideAtlas" id="O88848"/>
<dbReference type="ProteomicsDB" id="283173">
    <molecule id="O88848-1"/>
</dbReference>
<dbReference type="ProteomicsDB" id="283174">
    <molecule id="O88848-2"/>
</dbReference>
<dbReference type="Pumba" id="O88848"/>
<dbReference type="ABCD" id="O88848">
    <property type="antibodies" value="1 sequenced antibody"/>
</dbReference>
<dbReference type="Antibodypedia" id="15743">
    <property type="antibodies" value="126 antibodies from 29 providers"/>
</dbReference>
<dbReference type="DNASU" id="56297"/>
<dbReference type="Ensembl" id="ENSMUST00000023405.16">
    <molecule id="O88848-1"/>
    <property type="protein sequence ID" value="ENSMUSP00000023405.10"/>
    <property type="gene ID" value="ENSMUSG00000022722.19"/>
</dbReference>
<dbReference type="Ensembl" id="ENSMUST00000099646.10">
    <molecule id="O88848-2"/>
    <property type="protein sequence ID" value="ENSMUSP00000097238.4"/>
    <property type="gene ID" value="ENSMUSG00000022722.19"/>
</dbReference>
<dbReference type="Ensembl" id="ENSMUST00000118438.8">
    <molecule id="O88848-2"/>
    <property type="protein sequence ID" value="ENSMUSP00000113127.2"/>
    <property type="gene ID" value="ENSMUSG00000022722.19"/>
</dbReference>
<dbReference type="GeneID" id="56297"/>
<dbReference type="KEGG" id="mmu:56297"/>
<dbReference type="UCSC" id="uc007zpl.2">
    <molecule id="O88848-1"/>
    <property type="organism name" value="mouse"/>
</dbReference>
<dbReference type="UCSC" id="uc007zpm.2">
    <molecule id="O88848-2"/>
    <property type="organism name" value="mouse"/>
</dbReference>
<dbReference type="AGR" id="MGI:1927136"/>
<dbReference type="CTD" id="84100"/>
<dbReference type="MGI" id="MGI:1927136">
    <property type="gene designation" value="Arl6"/>
</dbReference>
<dbReference type="VEuPathDB" id="HostDB:ENSMUSG00000022722"/>
<dbReference type="eggNOG" id="KOG0070">
    <property type="taxonomic scope" value="Eukaryota"/>
</dbReference>
<dbReference type="GeneTree" id="ENSGT00940000156459"/>
<dbReference type="InParanoid" id="O88848"/>
<dbReference type="OMA" id="NKPWHIC"/>
<dbReference type="OrthoDB" id="442317at2759"/>
<dbReference type="PhylomeDB" id="O88848"/>
<dbReference type="TreeFam" id="TF105466"/>
<dbReference type="Reactome" id="R-MMU-5620922">
    <property type="pathway name" value="BBSome-mediated cargo-targeting to cilium"/>
</dbReference>
<dbReference type="BioGRID-ORCS" id="56297">
    <property type="hits" value="3 hits in 77 CRISPR screens"/>
</dbReference>
<dbReference type="ChiTaRS" id="Arl6">
    <property type="organism name" value="mouse"/>
</dbReference>
<dbReference type="PRO" id="PR:O88848"/>
<dbReference type="Proteomes" id="UP000000589">
    <property type="component" value="Chromosome 16"/>
</dbReference>
<dbReference type="RNAct" id="O88848">
    <property type="molecule type" value="protein"/>
</dbReference>
<dbReference type="Bgee" id="ENSMUSG00000022722">
    <property type="expression patterns" value="Expressed in olfactory epithelium and 261 other cell types or tissues"/>
</dbReference>
<dbReference type="ExpressionAtlas" id="O88848">
    <property type="expression patterns" value="baseline and differential"/>
</dbReference>
<dbReference type="GO" id="GO:0005879">
    <property type="term" value="C:axonemal microtubule"/>
    <property type="evidence" value="ECO:0000250"/>
    <property type="project" value="UniProtKB"/>
</dbReference>
<dbReference type="GO" id="GO:0005930">
    <property type="term" value="C:axoneme"/>
    <property type="evidence" value="ECO:0000250"/>
    <property type="project" value="UniProtKB"/>
</dbReference>
<dbReference type="GO" id="GO:0060170">
    <property type="term" value="C:ciliary membrane"/>
    <property type="evidence" value="ECO:0007669"/>
    <property type="project" value="UniProtKB-SubCell"/>
</dbReference>
<dbReference type="GO" id="GO:0005929">
    <property type="term" value="C:cilium"/>
    <property type="evidence" value="ECO:0000266"/>
    <property type="project" value="MGI"/>
</dbReference>
<dbReference type="GO" id="GO:0005737">
    <property type="term" value="C:cytoplasm"/>
    <property type="evidence" value="ECO:0000314"/>
    <property type="project" value="MGI"/>
</dbReference>
<dbReference type="GO" id="GO:0005829">
    <property type="term" value="C:cytosol"/>
    <property type="evidence" value="ECO:0000314"/>
    <property type="project" value="MGI"/>
</dbReference>
<dbReference type="GO" id="GO:0016020">
    <property type="term" value="C:membrane"/>
    <property type="evidence" value="ECO:0000314"/>
    <property type="project" value="MGI"/>
</dbReference>
<dbReference type="GO" id="GO:0030117">
    <property type="term" value="C:membrane coat"/>
    <property type="evidence" value="ECO:0000250"/>
    <property type="project" value="UniProtKB"/>
</dbReference>
<dbReference type="GO" id="GO:0005654">
    <property type="term" value="C:nucleoplasm"/>
    <property type="evidence" value="ECO:0007669"/>
    <property type="project" value="Ensembl"/>
</dbReference>
<dbReference type="GO" id="GO:0005525">
    <property type="term" value="F:GTP binding"/>
    <property type="evidence" value="ECO:0000250"/>
    <property type="project" value="MGI"/>
</dbReference>
<dbReference type="GO" id="GO:0003924">
    <property type="term" value="F:GTPase activity"/>
    <property type="evidence" value="ECO:0007669"/>
    <property type="project" value="InterPro"/>
</dbReference>
<dbReference type="GO" id="GO:0046872">
    <property type="term" value="F:metal ion binding"/>
    <property type="evidence" value="ECO:0007669"/>
    <property type="project" value="UniProtKB-KW"/>
</dbReference>
<dbReference type="GO" id="GO:1990404">
    <property type="term" value="F:NAD+-protein mono-ADP-ribosyltransferase activity"/>
    <property type="evidence" value="ECO:0000250"/>
    <property type="project" value="MGI"/>
</dbReference>
<dbReference type="GO" id="GO:0005543">
    <property type="term" value="F:phospholipid binding"/>
    <property type="evidence" value="ECO:0000250"/>
    <property type="project" value="UniProtKB"/>
</dbReference>
<dbReference type="GO" id="GO:0007420">
    <property type="term" value="P:brain development"/>
    <property type="evidence" value="ECO:0000315"/>
    <property type="project" value="MGI"/>
</dbReference>
<dbReference type="GO" id="GO:0060271">
    <property type="term" value="P:cilium assembly"/>
    <property type="evidence" value="ECO:0000315"/>
    <property type="project" value="MGI"/>
</dbReference>
<dbReference type="GO" id="GO:0045444">
    <property type="term" value="P:fat cell differentiation"/>
    <property type="evidence" value="ECO:0000270"/>
    <property type="project" value="BHF-UCL"/>
</dbReference>
<dbReference type="GO" id="GO:0061512">
    <property type="term" value="P:protein localization to cilium"/>
    <property type="evidence" value="ECO:0000266"/>
    <property type="project" value="MGI"/>
</dbReference>
<dbReference type="GO" id="GO:0097499">
    <property type="term" value="P:protein localization to non-motile cilium"/>
    <property type="evidence" value="ECO:0000314"/>
    <property type="project" value="UniProtKB"/>
</dbReference>
<dbReference type="GO" id="GO:0051258">
    <property type="term" value="P:protein polymerization"/>
    <property type="evidence" value="ECO:0000250"/>
    <property type="project" value="UniProtKB"/>
</dbReference>
<dbReference type="GO" id="GO:0006612">
    <property type="term" value="P:protein targeting to membrane"/>
    <property type="evidence" value="ECO:0000250"/>
    <property type="project" value="UniProtKB"/>
</dbReference>
<dbReference type="GO" id="GO:1903445">
    <property type="term" value="P:protein transport from ciliary membrane to plasma membrane"/>
    <property type="evidence" value="ECO:0000315"/>
    <property type="project" value="MGI"/>
</dbReference>
<dbReference type="GO" id="GO:0007265">
    <property type="term" value="P:Ras protein signal transduction"/>
    <property type="evidence" value="ECO:0000250"/>
    <property type="project" value="MGI"/>
</dbReference>
<dbReference type="GO" id="GO:0008589">
    <property type="term" value="P:regulation of smoothened signaling pathway"/>
    <property type="evidence" value="ECO:0000315"/>
    <property type="project" value="MGI"/>
</dbReference>
<dbReference type="GO" id="GO:0010842">
    <property type="term" value="P:retina layer formation"/>
    <property type="evidence" value="ECO:0000315"/>
    <property type="project" value="MGI"/>
</dbReference>
<dbReference type="GO" id="GO:0016055">
    <property type="term" value="P:Wnt signaling pathway"/>
    <property type="evidence" value="ECO:0007669"/>
    <property type="project" value="Ensembl"/>
</dbReference>
<dbReference type="CDD" id="cd04157">
    <property type="entry name" value="Arl6"/>
    <property type="match status" value="1"/>
</dbReference>
<dbReference type="FunFam" id="3.40.50.300:FF:000457">
    <property type="entry name" value="ADP-ribosylation factor-like protein 6"/>
    <property type="match status" value="1"/>
</dbReference>
<dbReference type="Gene3D" id="3.40.50.300">
    <property type="entry name" value="P-loop containing nucleotide triphosphate hydrolases"/>
    <property type="match status" value="1"/>
</dbReference>
<dbReference type="InterPro" id="IPR041839">
    <property type="entry name" value="Arl6"/>
</dbReference>
<dbReference type="InterPro" id="IPR027417">
    <property type="entry name" value="P-loop_NTPase"/>
</dbReference>
<dbReference type="InterPro" id="IPR005225">
    <property type="entry name" value="Small_GTP-bd"/>
</dbReference>
<dbReference type="InterPro" id="IPR024156">
    <property type="entry name" value="Small_GTPase_ARF"/>
</dbReference>
<dbReference type="InterPro" id="IPR006689">
    <property type="entry name" value="Small_GTPase_ARF/SAR"/>
</dbReference>
<dbReference type="NCBIfam" id="TIGR00231">
    <property type="entry name" value="small_GTP"/>
    <property type="match status" value="1"/>
</dbReference>
<dbReference type="PANTHER" id="PTHR11711">
    <property type="entry name" value="ADP RIBOSYLATION FACTOR-RELATED"/>
    <property type="match status" value="1"/>
</dbReference>
<dbReference type="Pfam" id="PF00025">
    <property type="entry name" value="Arf"/>
    <property type="match status" value="1"/>
</dbReference>
<dbReference type="PRINTS" id="PR00328">
    <property type="entry name" value="SAR1GTPBP"/>
</dbReference>
<dbReference type="SMART" id="SM00177">
    <property type="entry name" value="ARF"/>
    <property type="match status" value="1"/>
</dbReference>
<dbReference type="SMART" id="SM00178">
    <property type="entry name" value="SAR"/>
    <property type="match status" value="1"/>
</dbReference>
<dbReference type="SUPFAM" id="SSF52540">
    <property type="entry name" value="P-loop containing nucleoside triphosphate hydrolases"/>
    <property type="match status" value="1"/>
</dbReference>
<dbReference type="PROSITE" id="PS51417">
    <property type="entry name" value="ARF"/>
    <property type="match status" value="1"/>
</dbReference>
<name>ARL6_MOUSE</name>
<proteinExistence type="evidence at protein level"/>
<keyword id="KW-0025">Alternative splicing</keyword>
<keyword id="KW-1003">Cell membrane</keyword>
<keyword id="KW-0966">Cell projection</keyword>
<keyword id="KW-0970">Cilium biogenesis/degradation</keyword>
<keyword id="KW-0963">Cytoplasm</keyword>
<keyword id="KW-0206">Cytoskeleton</keyword>
<keyword id="KW-0342">GTP-binding</keyword>
<keyword id="KW-0449">Lipoprotein</keyword>
<keyword id="KW-0460">Magnesium</keyword>
<keyword id="KW-0472">Membrane</keyword>
<keyword id="KW-0479">Metal-binding</keyword>
<keyword id="KW-0519">Myristate</keyword>
<keyword id="KW-0547">Nucleotide-binding</keyword>
<keyword id="KW-0653">Protein transport</keyword>
<keyword id="KW-1185">Reference proteome</keyword>
<keyword id="KW-0813">Transport</keyword>
<reference key="1">
    <citation type="journal article" date="1999" name="FEBS Lett.">
        <title>A novel ADP-ribosylation like factor (ARL-6), interacts with the protein-conducting channel SEC61beta subunit.</title>
        <authorList>
            <person name="Ingley E."/>
            <person name="Williams J.H."/>
            <person name="Walker C.E."/>
            <person name="Tsai S."/>
            <person name="Colley S."/>
            <person name="Sayer M.S."/>
            <person name="Tilbrook P.A."/>
            <person name="Sarna M."/>
            <person name="Beaumont J.G."/>
            <person name="Klinken S.P."/>
        </authorList>
    </citation>
    <scope>NUCLEOTIDE SEQUENCE [MRNA] (ISOFORM 1)</scope>
</reference>
<reference key="2">
    <citation type="journal article" date="2005" name="Science">
        <title>The transcriptional landscape of the mammalian genome.</title>
        <authorList>
            <person name="Carninci P."/>
            <person name="Kasukawa T."/>
            <person name="Katayama S."/>
            <person name="Gough J."/>
            <person name="Frith M.C."/>
            <person name="Maeda N."/>
            <person name="Oyama R."/>
            <person name="Ravasi T."/>
            <person name="Lenhard B."/>
            <person name="Wells C."/>
            <person name="Kodzius R."/>
            <person name="Shimokawa K."/>
            <person name="Bajic V.B."/>
            <person name="Brenner S.E."/>
            <person name="Batalov S."/>
            <person name="Forrest A.R."/>
            <person name="Zavolan M."/>
            <person name="Davis M.J."/>
            <person name="Wilming L.G."/>
            <person name="Aidinis V."/>
            <person name="Allen J.E."/>
            <person name="Ambesi-Impiombato A."/>
            <person name="Apweiler R."/>
            <person name="Aturaliya R.N."/>
            <person name="Bailey T.L."/>
            <person name="Bansal M."/>
            <person name="Baxter L."/>
            <person name="Beisel K.W."/>
            <person name="Bersano T."/>
            <person name="Bono H."/>
            <person name="Chalk A.M."/>
            <person name="Chiu K.P."/>
            <person name="Choudhary V."/>
            <person name="Christoffels A."/>
            <person name="Clutterbuck D.R."/>
            <person name="Crowe M.L."/>
            <person name="Dalla E."/>
            <person name="Dalrymple B.P."/>
            <person name="de Bono B."/>
            <person name="Della Gatta G."/>
            <person name="di Bernardo D."/>
            <person name="Down T."/>
            <person name="Engstrom P."/>
            <person name="Fagiolini M."/>
            <person name="Faulkner G."/>
            <person name="Fletcher C.F."/>
            <person name="Fukushima T."/>
            <person name="Furuno M."/>
            <person name="Futaki S."/>
            <person name="Gariboldi M."/>
            <person name="Georgii-Hemming P."/>
            <person name="Gingeras T.R."/>
            <person name="Gojobori T."/>
            <person name="Green R.E."/>
            <person name="Gustincich S."/>
            <person name="Harbers M."/>
            <person name="Hayashi Y."/>
            <person name="Hensch T.K."/>
            <person name="Hirokawa N."/>
            <person name="Hill D."/>
            <person name="Huminiecki L."/>
            <person name="Iacono M."/>
            <person name="Ikeo K."/>
            <person name="Iwama A."/>
            <person name="Ishikawa T."/>
            <person name="Jakt M."/>
            <person name="Kanapin A."/>
            <person name="Katoh M."/>
            <person name="Kawasawa Y."/>
            <person name="Kelso J."/>
            <person name="Kitamura H."/>
            <person name="Kitano H."/>
            <person name="Kollias G."/>
            <person name="Krishnan S.P."/>
            <person name="Kruger A."/>
            <person name="Kummerfeld S.K."/>
            <person name="Kurochkin I.V."/>
            <person name="Lareau L.F."/>
            <person name="Lazarevic D."/>
            <person name="Lipovich L."/>
            <person name="Liu J."/>
            <person name="Liuni S."/>
            <person name="McWilliam S."/>
            <person name="Madan Babu M."/>
            <person name="Madera M."/>
            <person name="Marchionni L."/>
            <person name="Matsuda H."/>
            <person name="Matsuzawa S."/>
            <person name="Miki H."/>
            <person name="Mignone F."/>
            <person name="Miyake S."/>
            <person name="Morris K."/>
            <person name="Mottagui-Tabar S."/>
            <person name="Mulder N."/>
            <person name="Nakano N."/>
            <person name="Nakauchi H."/>
            <person name="Ng P."/>
            <person name="Nilsson R."/>
            <person name="Nishiguchi S."/>
            <person name="Nishikawa S."/>
            <person name="Nori F."/>
            <person name="Ohara O."/>
            <person name="Okazaki Y."/>
            <person name="Orlando V."/>
            <person name="Pang K.C."/>
            <person name="Pavan W.J."/>
            <person name="Pavesi G."/>
            <person name="Pesole G."/>
            <person name="Petrovsky N."/>
            <person name="Piazza S."/>
            <person name="Reed J."/>
            <person name="Reid J.F."/>
            <person name="Ring B.Z."/>
            <person name="Ringwald M."/>
            <person name="Rost B."/>
            <person name="Ruan Y."/>
            <person name="Salzberg S.L."/>
            <person name="Sandelin A."/>
            <person name="Schneider C."/>
            <person name="Schoenbach C."/>
            <person name="Sekiguchi K."/>
            <person name="Semple C.A."/>
            <person name="Seno S."/>
            <person name="Sessa L."/>
            <person name="Sheng Y."/>
            <person name="Shibata Y."/>
            <person name="Shimada H."/>
            <person name="Shimada K."/>
            <person name="Silva D."/>
            <person name="Sinclair B."/>
            <person name="Sperling S."/>
            <person name="Stupka E."/>
            <person name="Sugiura K."/>
            <person name="Sultana R."/>
            <person name="Takenaka Y."/>
            <person name="Taki K."/>
            <person name="Tammoja K."/>
            <person name="Tan S.L."/>
            <person name="Tang S."/>
            <person name="Taylor M.S."/>
            <person name="Tegner J."/>
            <person name="Teichmann S.A."/>
            <person name="Ueda H.R."/>
            <person name="van Nimwegen E."/>
            <person name="Verardo R."/>
            <person name="Wei C.L."/>
            <person name="Yagi K."/>
            <person name="Yamanishi H."/>
            <person name="Zabarovsky E."/>
            <person name="Zhu S."/>
            <person name="Zimmer A."/>
            <person name="Hide W."/>
            <person name="Bult C."/>
            <person name="Grimmond S.M."/>
            <person name="Teasdale R.D."/>
            <person name="Liu E.T."/>
            <person name="Brusic V."/>
            <person name="Quackenbush J."/>
            <person name="Wahlestedt C."/>
            <person name="Mattick J.S."/>
            <person name="Hume D.A."/>
            <person name="Kai C."/>
            <person name="Sasaki D."/>
            <person name="Tomaru Y."/>
            <person name="Fukuda S."/>
            <person name="Kanamori-Katayama M."/>
            <person name="Suzuki M."/>
            <person name="Aoki J."/>
            <person name="Arakawa T."/>
            <person name="Iida J."/>
            <person name="Imamura K."/>
            <person name="Itoh M."/>
            <person name="Kato T."/>
            <person name="Kawaji H."/>
            <person name="Kawagashira N."/>
            <person name="Kawashima T."/>
            <person name="Kojima M."/>
            <person name="Kondo S."/>
            <person name="Konno H."/>
            <person name="Nakano K."/>
            <person name="Ninomiya N."/>
            <person name="Nishio T."/>
            <person name="Okada M."/>
            <person name="Plessy C."/>
            <person name="Shibata K."/>
            <person name="Shiraki T."/>
            <person name="Suzuki S."/>
            <person name="Tagami M."/>
            <person name="Waki K."/>
            <person name="Watahiki A."/>
            <person name="Okamura-Oho Y."/>
            <person name="Suzuki H."/>
            <person name="Kawai J."/>
            <person name="Hayashizaki Y."/>
        </authorList>
    </citation>
    <scope>NUCLEOTIDE SEQUENCE [LARGE SCALE MRNA] (ISOFORMS 1 AND 2)</scope>
    <source>
        <strain>C57BL/6J</strain>
        <tissue>Embryo</tissue>
        <tissue>Visual cortex</tissue>
    </source>
</reference>
<reference key="3">
    <citation type="journal article" date="2010" name="Cell">
        <title>A tissue-specific atlas of mouse protein phosphorylation and expression.</title>
        <authorList>
            <person name="Huttlin E.L."/>
            <person name="Jedrychowski M.P."/>
            <person name="Elias J.E."/>
            <person name="Goswami T."/>
            <person name="Rad R."/>
            <person name="Beausoleil S.A."/>
            <person name="Villen J."/>
            <person name="Haas W."/>
            <person name="Sowa M.E."/>
            <person name="Gygi S.P."/>
        </authorList>
    </citation>
    <scope>IDENTIFICATION BY MASS SPECTROMETRY [LARGE SCALE ANALYSIS]</scope>
    <source>
        <tissue>Brain</tissue>
        <tissue>Brown adipose tissue</tissue>
        <tissue>Heart</tissue>
        <tissue>Kidney</tissue>
        <tissue>Liver</tissue>
        <tissue>Lung</tissue>
        <tissue>Pancreas</tissue>
        <tissue>Spleen</tissue>
        <tissue>Testis</tissue>
    </source>
</reference>
<reference key="4">
    <citation type="journal article" date="2010" name="PLoS Genet.">
        <title>Identification and functional analysis of the vision-specific BBS3 (ARL6) long isoform.</title>
        <authorList>
            <person name="Pretorius P.R."/>
            <person name="Baye L.M."/>
            <person name="Nishimura D.Y."/>
            <person name="Searby C.C."/>
            <person name="Bugge K."/>
            <person name="Yang B."/>
            <person name="Mullins R.F."/>
            <person name="Stone E.M."/>
            <person name="Sheffield V.C."/>
            <person name="Slusarski D.C."/>
        </authorList>
    </citation>
    <scope>ALTERNATIVE SPLICING (ISOFORM 2)</scope>
    <scope>FUNCTION</scope>
    <scope>TISSUE SPECIFICITY</scope>
    <scope>DISRUPTION PHENOTYPE</scope>
</reference>
<reference key="5">
    <citation type="journal article" date="2014" name="Hum. Mol. Genet.">
        <title>Bardet-Biedl syndrome proteins 1 and 3 regulate the ciliary trafficking of polycystic kidney disease 1 protein.</title>
        <authorList>
            <person name="Su X."/>
            <person name="Driscoll K."/>
            <person name="Yao G."/>
            <person name="Raed A."/>
            <person name="Wu M."/>
            <person name="Beales P.L."/>
            <person name="Zhou J."/>
        </authorList>
    </citation>
    <scope>FUNCTION</scope>
</reference>
<gene>
    <name type="primary">Arl6</name>
    <name type="synonym">Bbs3</name>
</gene>
<feature type="initiator methionine" description="Removed" evidence="3">
    <location>
        <position position="1"/>
    </location>
</feature>
<feature type="chain" id="PRO_0000207473" description="ADP-ribosylation factor-like protein 6">
    <location>
        <begin position="2"/>
        <end position="186"/>
    </location>
</feature>
<feature type="binding site" evidence="1">
    <location>
        <begin position="24"/>
        <end position="31"/>
    </location>
    <ligand>
        <name>GTP</name>
        <dbReference type="ChEBI" id="CHEBI:37565"/>
    </ligand>
</feature>
<feature type="binding site" evidence="1">
    <location>
        <position position="50"/>
    </location>
    <ligand>
        <name>GTP</name>
        <dbReference type="ChEBI" id="CHEBI:37565"/>
    </ligand>
</feature>
<feature type="binding site" evidence="1">
    <location>
        <position position="50"/>
    </location>
    <ligand>
        <name>Mg(2+)</name>
        <dbReference type="ChEBI" id="CHEBI:18420"/>
    </ligand>
</feature>
<feature type="binding site" evidence="1">
    <location>
        <begin position="69"/>
        <end position="73"/>
    </location>
    <ligand>
        <name>GTP</name>
        <dbReference type="ChEBI" id="CHEBI:37565"/>
    </ligand>
</feature>
<feature type="binding site" evidence="1">
    <location>
        <position position="72"/>
    </location>
    <ligand>
        <name>GTP</name>
        <dbReference type="ChEBI" id="CHEBI:37565"/>
    </ligand>
</feature>
<feature type="binding site" evidence="1">
    <location>
        <begin position="130"/>
        <end position="133"/>
    </location>
    <ligand>
        <name>GTP</name>
        <dbReference type="ChEBI" id="CHEBI:37565"/>
    </ligand>
</feature>
<feature type="binding site" evidence="1">
    <location>
        <position position="164"/>
    </location>
    <ligand>
        <name>GTP</name>
        <dbReference type="ChEBI" id="CHEBI:37565"/>
    </ligand>
</feature>
<feature type="lipid moiety-binding region" description="N-myristoyl glycine" evidence="3">
    <location>
        <position position="2"/>
    </location>
</feature>
<feature type="splice variant" id="VSP_040512" description="In isoform 2." evidence="6">
    <original>DQIQAVKT</original>
    <variation>EKTVQSDPSCEDVKR</variation>
    <location>
        <begin position="179"/>
        <end position="186"/>
    </location>
</feature>
<evidence type="ECO:0000250" key="1"/>
<evidence type="ECO:0000250" key="2">
    <source>
        <dbReference type="UniProtKB" id="Q9H0F7"/>
    </source>
</evidence>
<evidence type="ECO:0000255" key="3"/>
<evidence type="ECO:0000269" key="4">
    <source>
    </source>
</evidence>
<evidence type="ECO:0000269" key="5">
    <source>
    </source>
</evidence>
<evidence type="ECO:0000303" key="6">
    <source>
    </source>
</evidence>
<evidence type="ECO:0000305" key="7"/>
<comment type="function">
    <text evidence="2 4 5">Involved in membrane protein trafficking at the base of the ciliary organelle (By similarity). Mediates recruitment onto plasma membrane of the BBSome complex which would constitute a coat complex required for sorting of specific membrane proteins to the primary cilia (By similarity). Together with BBS1, is necessary for correct trafficking of PKD1 to primary cilia (PubMed:24939912). Together with the BBSome complex and LTZL1, controls SMO ciliary trafficking and contributes to the sonic hedgehog (SHH) pathway regulation (By similarity). May regulate cilia assembly and disassembly and subsequent ciliary signaling events such as the Wnt signaling cascade (By similarity). Isoform 2 may be required for proper retinal function and organization (PubMed:20333246).</text>
</comment>
<comment type="subunit">
    <text evidence="2">Interacts with SEC61B, ARL6IP1, ARL6IP2, ARL6IP3, ARL6IP4 ARL6IP5 and ARL6IP6. Interacts (GTP-bound form) with the BBSome a complex that contains BBS1, BBS2, BBS4, BBS5, BBS7, BBS8/TTC8, BBS9 and BBIP10. Interacts (GTP-free form) with IFT27.</text>
</comment>
<comment type="subcellular location">
    <subcellularLocation>
        <location evidence="1">Cell projection</location>
        <location evidence="1">Cilium membrane</location>
        <topology evidence="1">Peripheral membrane protein</topology>
        <orientation evidence="1">Cytoplasmic side</orientation>
    </subcellularLocation>
    <subcellularLocation>
        <location evidence="1">Cytoplasm</location>
        <location evidence="1">Cytoskeleton</location>
        <location evidence="1">Cilium axoneme</location>
    </subcellularLocation>
    <subcellularLocation>
        <location evidence="1">Cytoplasm</location>
        <location evidence="1">Cytoskeleton</location>
        <location evidence="1">Cilium basal body</location>
    </subcellularLocation>
    <text evidence="1">Appears in a pattern of punctae flanking the microtubule axoneme that likely correspond to small membrane-associated patches. Localizes to the so-called ciliary gate where vesicles carrying ciliary cargo fuse with the membrane (By similarity).</text>
</comment>
<comment type="alternative products">
    <event type="alternative splicing"/>
    <isoform>
        <id>O88848-1</id>
        <name>1</name>
        <name>Bbs3</name>
        <sequence type="displayed"/>
    </isoform>
    <isoform>
        <id>O88848-2</id>
        <name>2</name>
        <name>Bbs3l</name>
        <sequence type="described" ref="VSP_040512"/>
    </isoform>
</comment>
<comment type="tissue specificity">
    <text evidence="4">Most abundant in brain and kidney. Expressed in heart and eye. Isoform 2 is expressed only in the retina.</text>
</comment>
<comment type="disruption phenotype">
    <text evidence="4">Isoform 2 deficient mice present a disruption of the normal photoreceptor architecture.</text>
</comment>
<comment type="similarity">
    <text evidence="7">Belongs to the small GTPase superfamily. Arf family.</text>
</comment>
<protein>
    <recommendedName>
        <fullName>ADP-ribosylation factor-like protein 6</fullName>
    </recommendedName>
</protein>